<feature type="chain" id="PRO_1000016368" description="Histidine--tRNA ligase">
    <location>
        <begin position="1"/>
        <end position="423"/>
    </location>
</feature>
<proteinExistence type="inferred from homology"/>
<accession>A5UAB7</accession>
<sequence>MAKTIQAIRGMNDCAPTESPLWQWIEAQVRNVLNSYGYSEVRMPIVESTPLFARAIGEVTDVVSKEMYTFWDNDEQLTLRPEGTAGCVRAAIEHGWIYNNEQRLWYIGPMFRHERPQKGRYRQFHQAGVEVFGIANPKIDAELIMLTYRLWKALGIDQYVTLQLNSIGSLEARANYRSALVGFLENHQDLMSDEEKDRLVKNPLRILDTKNPELQKVLDNAPKLLDYLDDESREHFEQLCSLLDAVGIQYEINPKLVRGLDYYNKTVFEWVTSALGAQGTVCGGGRYDGLVEQLGGHATPSIGFAMGLERLVLLVQEVNPNVPVKSAVDIYVVYQGEGTTLAAFELAEKVRSELPHLNTMLHCSGGNFKKQFKRADKSGATLALVIGESEVQNKQVVVKHLQGGADQQTLDLVNIIDYIQTQF</sequence>
<evidence type="ECO:0000255" key="1">
    <source>
        <dbReference type="HAMAP-Rule" id="MF_00127"/>
    </source>
</evidence>
<comment type="catalytic activity">
    <reaction evidence="1">
        <text>tRNA(His) + L-histidine + ATP = L-histidyl-tRNA(His) + AMP + diphosphate + H(+)</text>
        <dbReference type="Rhea" id="RHEA:17313"/>
        <dbReference type="Rhea" id="RHEA-COMP:9665"/>
        <dbReference type="Rhea" id="RHEA-COMP:9689"/>
        <dbReference type="ChEBI" id="CHEBI:15378"/>
        <dbReference type="ChEBI" id="CHEBI:30616"/>
        <dbReference type="ChEBI" id="CHEBI:33019"/>
        <dbReference type="ChEBI" id="CHEBI:57595"/>
        <dbReference type="ChEBI" id="CHEBI:78442"/>
        <dbReference type="ChEBI" id="CHEBI:78527"/>
        <dbReference type="ChEBI" id="CHEBI:456215"/>
        <dbReference type="EC" id="6.1.1.21"/>
    </reaction>
</comment>
<comment type="subunit">
    <text evidence="1">Homodimer.</text>
</comment>
<comment type="subcellular location">
    <subcellularLocation>
        <location evidence="1">Cytoplasm</location>
    </subcellularLocation>
</comment>
<comment type="similarity">
    <text evidence="1">Belongs to the class-II aminoacyl-tRNA synthetase family.</text>
</comment>
<protein>
    <recommendedName>
        <fullName evidence="1">Histidine--tRNA ligase</fullName>
        <ecNumber evidence="1">6.1.1.21</ecNumber>
    </recommendedName>
    <alternativeName>
        <fullName evidence="1">Histidyl-tRNA synthetase</fullName>
        <shortName evidence="1">HisRS</shortName>
    </alternativeName>
</protein>
<gene>
    <name evidence="1" type="primary">hisS</name>
    <name type="ordered locus">CGSHiEE_01160</name>
</gene>
<reference key="1">
    <citation type="journal article" date="2007" name="Genome Biol.">
        <title>Characterization and modeling of the Haemophilus influenzae core and supragenomes based on the complete genomic sequences of Rd and 12 clinical nontypeable strains.</title>
        <authorList>
            <person name="Hogg J.S."/>
            <person name="Hu F.Z."/>
            <person name="Janto B."/>
            <person name="Boissy R."/>
            <person name="Hayes J."/>
            <person name="Keefe R."/>
            <person name="Post J.C."/>
            <person name="Ehrlich G.D."/>
        </authorList>
    </citation>
    <scope>NUCLEOTIDE SEQUENCE [LARGE SCALE GENOMIC DNA]</scope>
    <source>
        <strain>PittEE</strain>
    </source>
</reference>
<dbReference type="EC" id="6.1.1.21" evidence="1"/>
<dbReference type="EMBL" id="CP000671">
    <property type="protein sequence ID" value="ABQ97718.1"/>
    <property type="molecule type" value="Genomic_DNA"/>
</dbReference>
<dbReference type="SMR" id="A5UAB7"/>
<dbReference type="KEGG" id="hip:CGSHiEE_01160"/>
<dbReference type="HOGENOM" id="CLU_025113_1_1_6"/>
<dbReference type="GO" id="GO:0005737">
    <property type="term" value="C:cytoplasm"/>
    <property type="evidence" value="ECO:0007669"/>
    <property type="project" value="UniProtKB-SubCell"/>
</dbReference>
<dbReference type="GO" id="GO:0005524">
    <property type="term" value="F:ATP binding"/>
    <property type="evidence" value="ECO:0007669"/>
    <property type="project" value="UniProtKB-UniRule"/>
</dbReference>
<dbReference type="GO" id="GO:0004821">
    <property type="term" value="F:histidine-tRNA ligase activity"/>
    <property type="evidence" value="ECO:0007669"/>
    <property type="project" value="UniProtKB-UniRule"/>
</dbReference>
<dbReference type="GO" id="GO:0006427">
    <property type="term" value="P:histidyl-tRNA aminoacylation"/>
    <property type="evidence" value="ECO:0007669"/>
    <property type="project" value="UniProtKB-UniRule"/>
</dbReference>
<dbReference type="CDD" id="cd00773">
    <property type="entry name" value="HisRS-like_core"/>
    <property type="match status" value="1"/>
</dbReference>
<dbReference type="CDD" id="cd00859">
    <property type="entry name" value="HisRS_anticodon"/>
    <property type="match status" value="1"/>
</dbReference>
<dbReference type="FunFam" id="3.30.930.10:FF:000005">
    <property type="entry name" value="Histidine--tRNA ligase"/>
    <property type="match status" value="1"/>
</dbReference>
<dbReference type="Gene3D" id="3.40.50.800">
    <property type="entry name" value="Anticodon-binding domain"/>
    <property type="match status" value="1"/>
</dbReference>
<dbReference type="Gene3D" id="3.30.930.10">
    <property type="entry name" value="Bira Bifunctional Protein, Domain 2"/>
    <property type="match status" value="1"/>
</dbReference>
<dbReference type="HAMAP" id="MF_00127">
    <property type="entry name" value="His_tRNA_synth"/>
    <property type="match status" value="1"/>
</dbReference>
<dbReference type="InterPro" id="IPR006195">
    <property type="entry name" value="aa-tRNA-synth_II"/>
</dbReference>
<dbReference type="InterPro" id="IPR045864">
    <property type="entry name" value="aa-tRNA-synth_II/BPL/LPL"/>
</dbReference>
<dbReference type="InterPro" id="IPR004154">
    <property type="entry name" value="Anticodon-bd"/>
</dbReference>
<dbReference type="InterPro" id="IPR036621">
    <property type="entry name" value="Anticodon-bd_dom_sf"/>
</dbReference>
<dbReference type="InterPro" id="IPR015807">
    <property type="entry name" value="His-tRNA-ligase"/>
</dbReference>
<dbReference type="InterPro" id="IPR041715">
    <property type="entry name" value="HisRS-like_core"/>
</dbReference>
<dbReference type="InterPro" id="IPR004516">
    <property type="entry name" value="HisRS/HisZ"/>
</dbReference>
<dbReference type="InterPro" id="IPR033656">
    <property type="entry name" value="HisRS_anticodon"/>
</dbReference>
<dbReference type="NCBIfam" id="TIGR00442">
    <property type="entry name" value="hisS"/>
    <property type="match status" value="1"/>
</dbReference>
<dbReference type="PANTHER" id="PTHR43707:SF1">
    <property type="entry name" value="HISTIDINE--TRNA LIGASE, MITOCHONDRIAL-RELATED"/>
    <property type="match status" value="1"/>
</dbReference>
<dbReference type="PANTHER" id="PTHR43707">
    <property type="entry name" value="HISTIDYL-TRNA SYNTHETASE"/>
    <property type="match status" value="1"/>
</dbReference>
<dbReference type="Pfam" id="PF03129">
    <property type="entry name" value="HGTP_anticodon"/>
    <property type="match status" value="1"/>
</dbReference>
<dbReference type="Pfam" id="PF13393">
    <property type="entry name" value="tRNA-synt_His"/>
    <property type="match status" value="1"/>
</dbReference>
<dbReference type="PIRSF" id="PIRSF001549">
    <property type="entry name" value="His-tRNA_synth"/>
    <property type="match status" value="1"/>
</dbReference>
<dbReference type="SUPFAM" id="SSF52954">
    <property type="entry name" value="Class II aaRS ABD-related"/>
    <property type="match status" value="1"/>
</dbReference>
<dbReference type="SUPFAM" id="SSF55681">
    <property type="entry name" value="Class II aaRS and biotin synthetases"/>
    <property type="match status" value="1"/>
</dbReference>
<dbReference type="PROSITE" id="PS50862">
    <property type="entry name" value="AA_TRNA_LIGASE_II"/>
    <property type="match status" value="1"/>
</dbReference>
<organism>
    <name type="scientific">Haemophilus influenzae (strain PittEE)</name>
    <dbReference type="NCBI Taxonomy" id="374930"/>
    <lineage>
        <taxon>Bacteria</taxon>
        <taxon>Pseudomonadati</taxon>
        <taxon>Pseudomonadota</taxon>
        <taxon>Gammaproteobacteria</taxon>
        <taxon>Pasteurellales</taxon>
        <taxon>Pasteurellaceae</taxon>
        <taxon>Haemophilus</taxon>
    </lineage>
</organism>
<name>SYH_HAEIE</name>
<keyword id="KW-0030">Aminoacyl-tRNA synthetase</keyword>
<keyword id="KW-0067">ATP-binding</keyword>
<keyword id="KW-0963">Cytoplasm</keyword>
<keyword id="KW-0436">Ligase</keyword>
<keyword id="KW-0547">Nucleotide-binding</keyword>
<keyword id="KW-0648">Protein biosynthesis</keyword>